<sequence>MITVVTVPATTANLGPGFDCLGAALTLTNRFTFSLSDRPHVSVRGPEAAAVSSGPNNLAYRAYSRFYEYLGREAPPVYLEIDLRVPLARGLGSSATAIIGGLVGANRLAGFPLSHTEVLELAIEMEGHPDNVVPALLGGCRLAVQEDAGGWHWLEIPWDQDVVPILAIPDFELATETAREVLPPHCAYGDAIFNISHLGALLRGLETGQREWLQLALADRLHQPYRQSLIKGYPDLHRAALEAGAHGLVISGAGPTLLALGDPVTASAIATALKETWAKFDVQAQVEILAIQHQGTTVCDR</sequence>
<organism>
    <name type="scientific">Thermosynechococcus vestitus (strain NIES-2133 / IAM M-273 / BP-1)</name>
    <dbReference type="NCBI Taxonomy" id="197221"/>
    <lineage>
        <taxon>Bacteria</taxon>
        <taxon>Bacillati</taxon>
        <taxon>Cyanobacteriota</taxon>
        <taxon>Cyanophyceae</taxon>
        <taxon>Acaryochloridales</taxon>
        <taxon>Thermosynechococcaceae</taxon>
        <taxon>Thermosynechococcus</taxon>
    </lineage>
</organism>
<feature type="chain" id="PRO_0000156622" description="Homoserine kinase">
    <location>
        <begin position="1"/>
        <end position="301"/>
    </location>
</feature>
<feature type="binding site" evidence="1">
    <location>
        <begin position="86"/>
        <end position="96"/>
    </location>
    <ligand>
        <name>ATP</name>
        <dbReference type="ChEBI" id="CHEBI:30616"/>
    </ligand>
</feature>
<proteinExistence type="inferred from homology"/>
<comment type="function">
    <text evidence="1">Catalyzes the ATP-dependent phosphorylation of L-homoserine to L-homoserine phosphate.</text>
</comment>
<comment type="catalytic activity">
    <reaction evidence="1">
        <text>L-homoserine + ATP = O-phospho-L-homoserine + ADP + H(+)</text>
        <dbReference type="Rhea" id="RHEA:13985"/>
        <dbReference type="ChEBI" id="CHEBI:15378"/>
        <dbReference type="ChEBI" id="CHEBI:30616"/>
        <dbReference type="ChEBI" id="CHEBI:57476"/>
        <dbReference type="ChEBI" id="CHEBI:57590"/>
        <dbReference type="ChEBI" id="CHEBI:456216"/>
        <dbReference type="EC" id="2.7.1.39"/>
    </reaction>
</comment>
<comment type="pathway">
    <text evidence="1">Amino-acid biosynthesis; L-threonine biosynthesis; L-threonine from L-aspartate: step 4/5.</text>
</comment>
<comment type="subcellular location">
    <subcellularLocation>
        <location evidence="1">Cytoplasm</location>
    </subcellularLocation>
</comment>
<comment type="similarity">
    <text evidence="1">Belongs to the GHMP kinase family. Homoserine kinase subfamily.</text>
</comment>
<reference key="1">
    <citation type="journal article" date="2002" name="DNA Res.">
        <title>Complete genome structure of the thermophilic cyanobacterium Thermosynechococcus elongatus BP-1.</title>
        <authorList>
            <person name="Nakamura Y."/>
            <person name="Kaneko T."/>
            <person name="Sato S."/>
            <person name="Ikeuchi M."/>
            <person name="Katoh H."/>
            <person name="Sasamoto S."/>
            <person name="Watanabe A."/>
            <person name="Iriguchi M."/>
            <person name="Kawashima K."/>
            <person name="Kimura T."/>
            <person name="Kishida Y."/>
            <person name="Kiyokawa C."/>
            <person name="Kohara M."/>
            <person name="Matsumoto M."/>
            <person name="Matsuno A."/>
            <person name="Nakazaki N."/>
            <person name="Shimpo S."/>
            <person name="Sugimoto M."/>
            <person name="Takeuchi C."/>
            <person name="Yamada M."/>
            <person name="Tabata S."/>
        </authorList>
    </citation>
    <scope>NUCLEOTIDE SEQUENCE [LARGE SCALE GENOMIC DNA]</scope>
    <source>
        <strain>NIES-2133 / IAM M-273 / BP-1</strain>
    </source>
</reference>
<name>KHSE_THEVB</name>
<gene>
    <name evidence="1" type="primary">thrB</name>
    <name type="ordered locus">tlr1765</name>
</gene>
<dbReference type="EC" id="2.7.1.39" evidence="1"/>
<dbReference type="EMBL" id="BA000039">
    <property type="protein sequence ID" value="BAC09317.1"/>
    <property type="molecule type" value="Genomic_DNA"/>
</dbReference>
<dbReference type="RefSeq" id="NP_682555.1">
    <property type="nucleotide sequence ID" value="NC_004113.1"/>
</dbReference>
<dbReference type="RefSeq" id="WP_011057602.1">
    <property type="nucleotide sequence ID" value="NC_004113.1"/>
</dbReference>
<dbReference type="SMR" id="Q8DI27"/>
<dbReference type="STRING" id="197221.gene:10748370"/>
<dbReference type="EnsemblBacteria" id="BAC09317">
    <property type="protein sequence ID" value="BAC09317"/>
    <property type="gene ID" value="BAC09317"/>
</dbReference>
<dbReference type="KEGG" id="tel:tlr1765"/>
<dbReference type="PATRIC" id="fig|197221.4.peg.1846"/>
<dbReference type="eggNOG" id="COG0083">
    <property type="taxonomic scope" value="Bacteria"/>
</dbReference>
<dbReference type="UniPathway" id="UPA00050">
    <property type="reaction ID" value="UER00064"/>
</dbReference>
<dbReference type="Proteomes" id="UP000000440">
    <property type="component" value="Chromosome"/>
</dbReference>
<dbReference type="GO" id="GO:0005737">
    <property type="term" value="C:cytoplasm"/>
    <property type="evidence" value="ECO:0007669"/>
    <property type="project" value="UniProtKB-SubCell"/>
</dbReference>
<dbReference type="GO" id="GO:0005524">
    <property type="term" value="F:ATP binding"/>
    <property type="evidence" value="ECO:0007669"/>
    <property type="project" value="UniProtKB-UniRule"/>
</dbReference>
<dbReference type="GO" id="GO:0004413">
    <property type="term" value="F:homoserine kinase activity"/>
    <property type="evidence" value="ECO:0007669"/>
    <property type="project" value="UniProtKB-UniRule"/>
</dbReference>
<dbReference type="GO" id="GO:0009088">
    <property type="term" value="P:threonine biosynthetic process"/>
    <property type="evidence" value="ECO:0007669"/>
    <property type="project" value="UniProtKB-UniRule"/>
</dbReference>
<dbReference type="Gene3D" id="3.30.230.10">
    <property type="match status" value="1"/>
</dbReference>
<dbReference type="Gene3D" id="3.30.70.890">
    <property type="entry name" value="GHMP kinase, C-terminal domain"/>
    <property type="match status" value="1"/>
</dbReference>
<dbReference type="HAMAP" id="MF_00384">
    <property type="entry name" value="Homoser_kinase"/>
    <property type="match status" value="1"/>
</dbReference>
<dbReference type="InterPro" id="IPR013750">
    <property type="entry name" value="GHMP_kinase_C_dom"/>
</dbReference>
<dbReference type="InterPro" id="IPR036554">
    <property type="entry name" value="GHMP_kinase_C_sf"/>
</dbReference>
<dbReference type="InterPro" id="IPR006204">
    <property type="entry name" value="GHMP_kinase_N_dom"/>
</dbReference>
<dbReference type="InterPro" id="IPR006203">
    <property type="entry name" value="GHMP_knse_ATP-bd_CS"/>
</dbReference>
<dbReference type="InterPro" id="IPR000870">
    <property type="entry name" value="Homoserine_kinase"/>
</dbReference>
<dbReference type="InterPro" id="IPR020568">
    <property type="entry name" value="Ribosomal_Su5_D2-typ_SF"/>
</dbReference>
<dbReference type="InterPro" id="IPR014721">
    <property type="entry name" value="Ribsml_uS5_D2-typ_fold_subgr"/>
</dbReference>
<dbReference type="NCBIfam" id="TIGR00191">
    <property type="entry name" value="thrB"/>
    <property type="match status" value="1"/>
</dbReference>
<dbReference type="PANTHER" id="PTHR20861:SF1">
    <property type="entry name" value="HOMOSERINE KINASE"/>
    <property type="match status" value="1"/>
</dbReference>
<dbReference type="PANTHER" id="PTHR20861">
    <property type="entry name" value="HOMOSERINE/4-DIPHOSPHOCYTIDYL-2-C-METHYL-D-ERYTHRITOL KINASE"/>
    <property type="match status" value="1"/>
</dbReference>
<dbReference type="Pfam" id="PF08544">
    <property type="entry name" value="GHMP_kinases_C"/>
    <property type="match status" value="1"/>
</dbReference>
<dbReference type="Pfam" id="PF00288">
    <property type="entry name" value="GHMP_kinases_N"/>
    <property type="match status" value="1"/>
</dbReference>
<dbReference type="PIRSF" id="PIRSF000676">
    <property type="entry name" value="Homoser_kin"/>
    <property type="match status" value="1"/>
</dbReference>
<dbReference type="PRINTS" id="PR00958">
    <property type="entry name" value="HOMSERKINASE"/>
</dbReference>
<dbReference type="SUPFAM" id="SSF55060">
    <property type="entry name" value="GHMP Kinase, C-terminal domain"/>
    <property type="match status" value="1"/>
</dbReference>
<dbReference type="SUPFAM" id="SSF54211">
    <property type="entry name" value="Ribosomal protein S5 domain 2-like"/>
    <property type="match status" value="1"/>
</dbReference>
<dbReference type="PROSITE" id="PS00627">
    <property type="entry name" value="GHMP_KINASES_ATP"/>
    <property type="match status" value="1"/>
</dbReference>
<accession>Q8DI27</accession>
<evidence type="ECO:0000255" key="1">
    <source>
        <dbReference type="HAMAP-Rule" id="MF_00384"/>
    </source>
</evidence>
<keyword id="KW-0028">Amino-acid biosynthesis</keyword>
<keyword id="KW-0067">ATP-binding</keyword>
<keyword id="KW-0963">Cytoplasm</keyword>
<keyword id="KW-0418">Kinase</keyword>
<keyword id="KW-0547">Nucleotide-binding</keyword>
<keyword id="KW-1185">Reference proteome</keyword>
<keyword id="KW-0791">Threonine biosynthesis</keyword>
<keyword id="KW-0808">Transferase</keyword>
<protein>
    <recommendedName>
        <fullName evidence="1">Homoserine kinase</fullName>
        <shortName evidence="1">HK</shortName>
        <shortName evidence="1">HSK</shortName>
        <ecNumber evidence="1">2.7.1.39</ecNumber>
    </recommendedName>
</protein>